<proteinExistence type="evidence at protein level"/>
<keyword id="KW-0010">Activator</keyword>
<keyword id="KW-0238">DNA-binding</keyword>
<keyword id="KW-0539">Nucleus</keyword>
<keyword id="KW-0597">Phosphoprotein</keyword>
<keyword id="KW-1185">Reference proteome</keyword>
<keyword id="KW-0804">Transcription</keyword>
<keyword id="KW-0805">Transcription regulation</keyword>
<name>HAP5_YEAST</name>
<feature type="chain" id="PRO_0000218260" description="Transcriptional activator HAP5">
    <location>
        <begin position="1"/>
        <end position="242"/>
    </location>
</feature>
<feature type="region of interest" description="Disordered" evidence="1">
    <location>
        <begin position="1"/>
        <end position="108"/>
    </location>
</feature>
<feature type="compositionally biased region" description="Polar residues" evidence="1">
    <location>
        <begin position="1"/>
        <end position="15"/>
    </location>
</feature>
<feature type="compositionally biased region" description="Acidic residues" evidence="1">
    <location>
        <begin position="91"/>
        <end position="108"/>
    </location>
</feature>
<feature type="modified residue" description="Phosphoserine" evidence="6 7">
    <location>
        <position position="7"/>
    </location>
</feature>
<evidence type="ECO:0000256" key="1">
    <source>
        <dbReference type="SAM" id="MobiDB-lite"/>
    </source>
</evidence>
<evidence type="ECO:0000269" key="2">
    <source>
    </source>
</evidence>
<evidence type="ECO:0000269" key="3">
    <source>
    </source>
</evidence>
<evidence type="ECO:0000269" key="4">
    <source>
    </source>
</evidence>
<evidence type="ECO:0000305" key="5"/>
<evidence type="ECO:0007744" key="6">
    <source>
    </source>
</evidence>
<evidence type="ECO:0007744" key="7">
    <source>
    </source>
</evidence>
<sequence length="242" mass="27676">MTDRNFSPQQGQGPQESLPEGPQPSTMIQREEMNMPRQYSEQQQLQENEGEGENTRLPVSEEEFRMVQELQAIQAGHDQANLPPSGRGSLEGEDNGNSDGADGEMDEDDEEYDVFRNVGQGLVGHYKEIMIRYWQELINEIESTNEPGSEHQDDFKSHSLPFARIRKVMKTDEDVKMISAEAPIIFAKACEIFITELTMRAWCVAERNKRRTLQKADIAEALQKSDMFDFLIDVVPRRPLPQ</sequence>
<gene>
    <name type="primary">HAP5</name>
    <name type="ordered locus">YOR358W</name>
</gene>
<accession>Q02516</accession>
<accession>D6W353</accession>
<accession>Q08827</accession>
<protein>
    <recommendedName>
        <fullName>Transcriptional activator HAP5</fullName>
    </recommendedName>
</protein>
<comment type="function">
    <text>Acts a component of the CCAT-binding factor, which is a transcriptional activator and binds to the upstream activation site (UAS2) of the CYC1 gene and other genes involved in mitochondrial electron transport and activates their expression. Recognizes the sequence 5'-CCAAT-3'. HAP5 is essential for DNA-binding activity. It may be the linchpin that binds to the subunit association domains (SAD) of HAP2 and HAP3 to bring these proteins together.</text>
</comment>
<comment type="subunit">
    <text evidence="2 4">Component of the CCAT-binding factor (CBF or HAP complex II), which consists of one copy each of HAP2, HAP3, HAP4 and HAP5. The assembly of the HAP2-HAP3-HAP5 heteromer (HAP complex I) occurs in a one-step pathway and its binding to DNA is a prerequisite for the association of HAP4.</text>
</comment>
<comment type="interaction">
    <interactant intactId="EBI-8165">
        <id>Q02516</id>
    </interactant>
    <interactant intactId="EBI-8152">
        <id>P06774</id>
        <label>HAP2</label>
    </interactant>
    <organismsDiffer>false</organismsDiffer>
    <experiments>7</experiments>
</comment>
<comment type="subcellular location">
    <subcellularLocation>
        <location>Nucleus</location>
    </subcellularLocation>
</comment>
<comment type="miscellaneous">
    <text evidence="3">Present with 450 molecules/cell in log phase SD medium.</text>
</comment>
<comment type="similarity">
    <text evidence="5">Belongs to the NFYC/HAP5 subunit family.</text>
</comment>
<reference key="1">
    <citation type="journal article" date="1995" name="Genes Dev.">
        <title>Cloning of yeast HAP5: a novel subunit of a heterotrimeric complex required for CCAAT binding.</title>
        <authorList>
            <person name="McNabb D.S."/>
            <person name="Xing Y."/>
            <person name="Guarente L."/>
        </authorList>
    </citation>
    <scope>NUCLEOTIDE SEQUENCE [GENOMIC DNA] OF 27-242</scope>
    <source>
        <strain>ATCC 204508 / S288c</strain>
    </source>
</reference>
<reference key="2">
    <citation type="submission" date="1997-01" db="EMBL/GenBank/DDBJ databases">
        <authorList>
            <person name="McNabb D.S."/>
        </authorList>
    </citation>
    <scope>NUCLEOTIDE SEQUENCE [GENOMIC DNA]</scope>
    <source>
        <strain>ATCC 204508 / S288c</strain>
    </source>
</reference>
<reference key="3">
    <citation type="journal article" date="1997" name="Nature">
        <title>The nucleotide sequence of Saccharomyces cerevisiae chromosome XV.</title>
        <authorList>
            <person name="Dujon B."/>
            <person name="Albermann K."/>
            <person name="Aldea M."/>
            <person name="Alexandraki D."/>
            <person name="Ansorge W."/>
            <person name="Arino J."/>
            <person name="Benes V."/>
            <person name="Bohn C."/>
            <person name="Bolotin-Fukuhara M."/>
            <person name="Bordonne R."/>
            <person name="Boyer J."/>
            <person name="Camasses A."/>
            <person name="Casamayor A."/>
            <person name="Casas C."/>
            <person name="Cheret G."/>
            <person name="Cziepluch C."/>
            <person name="Daignan-Fornier B."/>
            <person name="Dang V.-D."/>
            <person name="de Haan M."/>
            <person name="Delius H."/>
            <person name="Durand P."/>
            <person name="Fairhead C."/>
            <person name="Feldmann H."/>
            <person name="Gaillon L."/>
            <person name="Galisson F."/>
            <person name="Gamo F.-J."/>
            <person name="Gancedo C."/>
            <person name="Goffeau A."/>
            <person name="Goulding S.E."/>
            <person name="Grivell L.A."/>
            <person name="Habbig B."/>
            <person name="Hand N.J."/>
            <person name="Hani J."/>
            <person name="Hattenhorst U."/>
            <person name="Hebling U."/>
            <person name="Hernando Y."/>
            <person name="Herrero E."/>
            <person name="Heumann K."/>
            <person name="Hiesel R."/>
            <person name="Hilger F."/>
            <person name="Hofmann B."/>
            <person name="Hollenberg C.P."/>
            <person name="Hughes B."/>
            <person name="Jauniaux J.-C."/>
            <person name="Kalogeropoulos A."/>
            <person name="Katsoulou C."/>
            <person name="Kordes E."/>
            <person name="Lafuente M.J."/>
            <person name="Landt O."/>
            <person name="Louis E.J."/>
            <person name="Maarse A.C."/>
            <person name="Madania A."/>
            <person name="Mannhaupt G."/>
            <person name="Marck C."/>
            <person name="Martin R.P."/>
            <person name="Mewes H.-W."/>
            <person name="Michaux G."/>
            <person name="Paces V."/>
            <person name="Parle-McDermott A.G."/>
            <person name="Pearson B.M."/>
            <person name="Perrin A."/>
            <person name="Pettersson B."/>
            <person name="Poch O."/>
            <person name="Pohl T.M."/>
            <person name="Poirey R."/>
            <person name="Portetelle D."/>
            <person name="Pujol A."/>
            <person name="Purnelle B."/>
            <person name="Ramezani Rad M."/>
            <person name="Rechmann S."/>
            <person name="Schwager C."/>
            <person name="Schweizer M."/>
            <person name="Sor F."/>
            <person name="Sterky F."/>
            <person name="Tarassov I.A."/>
            <person name="Teodoru C."/>
            <person name="Tettelin H."/>
            <person name="Thierry A."/>
            <person name="Tobiasch E."/>
            <person name="Tzermia M."/>
            <person name="Uhlen M."/>
            <person name="Unseld M."/>
            <person name="Valens M."/>
            <person name="Vandenbol M."/>
            <person name="Vetter I."/>
            <person name="Vlcek C."/>
            <person name="Voet M."/>
            <person name="Volckaert G."/>
            <person name="Voss H."/>
            <person name="Wambutt R."/>
            <person name="Wedler H."/>
            <person name="Wiemann S."/>
            <person name="Winsor B."/>
            <person name="Wolfe K.H."/>
            <person name="Zollner A."/>
            <person name="Zumstein E."/>
            <person name="Kleine K."/>
        </authorList>
    </citation>
    <scope>NUCLEOTIDE SEQUENCE [LARGE SCALE GENOMIC DNA]</scope>
    <source>
        <strain>ATCC 204508 / S288c</strain>
    </source>
</reference>
<reference key="4">
    <citation type="journal article" date="2014" name="G3 (Bethesda)">
        <title>The reference genome sequence of Saccharomyces cerevisiae: Then and now.</title>
        <authorList>
            <person name="Engel S.R."/>
            <person name="Dietrich F.S."/>
            <person name="Fisk D.G."/>
            <person name="Binkley G."/>
            <person name="Balakrishnan R."/>
            <person name="Costanzo M.C."/>
            <person name="Dwight S.S."/>
            <person name="Hitz B.C."/>
            <person name="Karra K."/>
            <person name="Nash R.S."/>
            <person name="Weng S."/>
            <person name="Wong E.D."/>
            <person name="Lloyd P."/>
            <person name="Skrzypek M.S."/>
            <person name="Miyasato S.R."/>
            <person name="Simison M."/>
            <person name="Cherry J.M."/>
        </authorList>
    </citation>
    <scope>GENOME REANNOTATION</scope>
    <source>
        <strain>ATCC 204508 / S288c</strain>
    </source>
</reference>
<reference key="5">
    <citation type="journal article" date="1997" name="Mol. Cell. Biol.">
        <title>The Saccharomyces cerevisiae Hap5p homolog from fission yeast reveals two conserved domains that are essential for assembly of heterotetrameric CCAAT-binding factor.</title>
        <authorList>
            <person name="McNabb D.S."/>
            <person name="Tseng K.A.-S."/>
            <person name="Guarente L."/>
        </authorList>
    </citation>
    <scope>IDENTIFICATION IN THE CCAT-BINDING FACTOR</scope>
</reference>
<reference key="6">
    <citation type="journal article" date="2001" name="J. Biol. Chem.">
        <title>A multiprotein complex that interacts with RNA polymerase II elongator.</title>
        <authorList>
            <person name="Li Y."/>
            <person name="Takagi Y."/>
            <person name="Jiang Y."/>
            <person name="Tokunaga M."/>
            <person name="Erdjument-Bromage H."/>
            <person name="Tempst P."/>
            <person name="Kornberg R.D."/>
        </authorList>
    </citation>
    <scope>IDENTIFICATION IN THE CCAT-BINDING FACTOR</scope>
</reference>
<reference key="7">
    <citation type="journal article" date="2003" name="Nature">
        <title>Global analysis of protein expression in yeast.</title>
        <authorList>
            <person name="Ghaemmaghami S."/>
            <person name="Huh W.-K."/>
            <person name="Bower K."/>
            <person name="Howson R.W."/>
            <person name="Belle A."/>
            <person name="Dephoure N."/>
            <person name="O'Shea E.K."/>
            <person name="Weissman J.S."/>
        </authorList>
    </citation>
    <scope>LEVEL OF PROTEIN EXPRESSION [LARGE SCALE ANALYSIS]</scope>
</reference>
<reference key="8">
    <citation type="journal article" date="2005" name="Eukaryot. Cell">
        <title>Assembly of the Hap2p/Hap3p/Hap4p/Hap5p-DNA complex in Saccharomyces cerevisiae.</title>
        <authorList>
            <person name="McNabb D.S."/>
            <person name="Pinto I."/>
        </authorList>
    </citation>
    <scope>ASSEMBLY OF THE CCAT-BINDING FACTOR</scope>
</reference>
<reference key="9">
    <citation type="journal article" date="2008" name="Mol. Cell. Proteomics">
        <title>A multidimensional chromatography technology for in-depth phosphoproteome analysis.</title>
        <authorList>
            <person name="Albuquerque C.P."/>
            <person name="Smolka M.B."/>
            <person name="Payne S.H."/>
            <person name="Bafna V."/>
            <person name="Eng J."/>
            <person name="Zhou H."/>
        </authorList>
    </citation>
    <scope>PHOSPHORYLATION [LARGE SCALE ANALYSIS] AT SER-7</scope>
    <scope>IDENTIFICATION BY MASS SPECTROMETRY [LARGE SCALE ANALYSIS]</scope>
</reference>
<reference key="10">
    <citation type="journal article" date="2009" name="Science">
        <title>Global analysis of Cdk1 substrate phosphorylation sites provides insights into evolution.</title>
        <authorList>
            <person name="Holt L.J."/>
            <person name="Tuch B.B."/>
            <person name="Villen J."/>
            <person name="Johnson A.D."/>
            <person name="Gygi S.P."/>
            <person name="Morgan D.O."/>
        </authorList>
    </citation>
    <scope>PHOSPHORYLATION [LARGE SCALE ANALYSIS] AT SER-7</scope>
    <scope>IDENTIFICATION BY MASS SPECTROMETRY [LARGE SCALE ANALYSIS]</scope>
</reference>
<dbReference type="EMBL" id="U19932">
    <property type="protein sequence ID" value="AAC49610.1"/>
    <property type="molecule type" value="Genomic_DNA"/>
</dbReference>
<dbReference type="EMBL" id="Z75266">
    <property type="protein sequence ID" value="CAA99687.1"/>
    <property type="molecule type" value="Genomic_DNA"/>
</dbReference>
<dbReference type="EMBL" id="BK006948">
    <property type="protein sequence ID" value="DAA11119.1"/>
    <property type="molecule type" value="Genomic_DNA"/>
</dbReference>
<dbReference type="PIR" id="S67270">
    <property type="entry name" value="S67270"/>
</dbReference>
<dbReference type="RefSeq" id="NP_015003.1">
    <property type="nucleotide sequence ID" value="NM_001183778.1"/>
</dbReference>
<dbReference type="SMR" id="Q02516"/>
<dbReference type="BioGRID" id="34743">
    <property type="interactions" value="437"/>
</dbReference>
<dbReference type="ComplexPortal" id="CPX-1830">
    <property type="entry name" value="CCAAT-binding factor complex"/>
</dbReference>
<dbReference type="DIP" id="DIP-1363N"/>
<dbReference type="FunCoup" id="Q02516">
    <property type="interactions" value="739"/>
</dbReference>
<dbReference type="IntAct" id="Q02516">
    <property type="interactions" value="10"/>
</dbReference>
<dbReference type="MINT" id="Q02516"/>
<dbReference type="STRING" id="4932.YOR358W"/>
<dbReference type="iPTMnet" id="Q02516"/>
<dbReference type="PaxDb" id="4932-YOR358W"/>
<dbReference type="PeptideAtlas" id="Q02516"/>
<dbReference type="EnsemblFungi" id="YOR358W_mRNA">
    <property type="protein sequence ID" value="YOR358W"/>
    <property type="gene ID" value="YOR358W"/>
</dbReference>
<dbReference type="GeneID" id="854540"/>
<dbReference type="KEGG" id="sce:YOR358W"/>
<dbReference type="AGR" id="SGD:S000005885"/>
<dbReference type="SGD" id="S000005885">
    <property type="gene designation" value="HAP5"/>
</dbReference>
<dbReference type="VEuPathDB" id="FungiDB:YOR358W"/>
<dbReference type="eggNOG" id="KOG1657">
    <property type="taxonomic scope" value="Eukaryota"/>
</dbReference>
<dbReference type="GeneTree" id="ENSGT00940000155689"/>
<dbReference type="HOGENOM" id="CLU_1134110_0_0_1"/>
<dbReference type="InParanoid" id="Q02516"/>
<dbReference type="OrthoDB" id="1272441at2759"/>
<dbReference type="BioCyc" id="YEAST:G3O-33829-MONOMER"/>
<dbReference type="BioGRID-ORCS" id="854540">
    <property type="hits" value="5 hits in 10 CRISPR screens"/>
</dbReference>
<dbReference type="PRO" id="PR:Q02516"/>
<dbReference type="Proteomes" id="UP000002311">
    <property type="component" value="Chromosome XV"/>
</dbReference>
<dbReference type="RNAct" id="Q02516">
    <property type="molecule type" value="protein"/>
</dbReference>
<dbReference type="GO" id="GO:0016602">
    <property type="term" value="C:CCAAT-binding factor complex"/>
    <property type="evidence" value="ECO:0000314"/>
    <property type="project" value="SGD"/>
</dbReference>
<dbReference type="GO" id="GO:0005634">
    <property type="term" value="C:nucleus"/>
    <property type="evidence" value="ECO:0000318"/>
    <property type="project" value="GO_Central"/>
</dbReference>
<dbReference type="GO" id="GO:0003677">
    <property type="term" value="F:DNA binding"/>
    <property type="evidence" value="ECO:0007669"/>
    <property type="project" value="UniProtKB-KW"/>
</dbReference>
<dbReference type="GO" id="GO:0001228">
    <property type="term" value="F:DNA-binding transcription activator activity, RNA polymerase II-specific"/>
    <property type="evidence" value="ECO:0000318"/>
    <property type="project" value="GO_Central"/>
</dbReference>
<dbReference type="GO" id="GO:0046982">
    <property type="term" value="F:protein heterodimerization activity"/>
    <property type="evidence" value="ECO:0007669"/>
    <property type="project" value="InterPro"/>
</dbReference>
<dbReference type="GO" id="GO:0045944">
    <property type="term" value="P:positive regulation of transcription by RNA polymerase II"/>
    <property type="evidence" value="ECO:0000315"/>
    <property type="project" value="SGD"/>
</dbReference>
<dbReference type="GO" id="GO:0006109">
    <property type="term" value="P:regulation of carbohydrate metabolic process"/>
    <property type="evidence" value="ECO:0000303"/>
    <property type="project" value="ComplexPortal"/>
</dbReference>
<dbReference type="GO" id="GO:0043457">
    <property type="term" value="P:regulation of cellular respiration"/>
    <property type="evidence" value="ECO:0000316"/>
    <property type="project" value="SGD"/>
</dbReference>
<dbReference type="GO" id="GO:0006355">
    <property type="term" value="P:regulation of DNA-templated transcription"/>
    <property type="evidence" value="ECO:0000303"/>
    <property type="project" value="ComplexPortal"/>
</dbReference>
<dbReference type="GO" id="GO:0006357">
    <property type="term" value="P:regulation of transcription by RNA polymerase II"/>
    <property type="evidence" value="ECO:0000318"/>
    <property type="project" value="GO_Central"/>
</dbReference>
<dbReference type="CDD" id="cd22908">
    <property type="entry name" value="HFD_NFYC-like"/>
    <property type="match status" value="1"/>
</dbReference>
<dbReference type="FunFam" id="1.10.20.10:FF:000017">
    <property type="entry name" value="Ccaat-binding factor complex subunit"/>
    <property type="match status" value="1"/>
</dbReference>
<dbReference type="Gene3D" id="1.10.20.10">
    <property type="entry name" value="Histone, subunit A"/>
    <property type="match status" value="1"/>
</dbReference>
<dbReference type="InterPro" id="IPR009072">
    <property type="entry name" value="Histone-fold"/>
</dbReference>
<dbReference type="InterPro" id="IPR007125">
    <property type="entry name" value="Histone_H2A/H2B/H3"/>
</dbReference>
<dbReference type="InterPro" id="IPR050568">
    <property type="entry name" value="Transcr_DNA_Rep_Reg"/>
</dbReference>
<dbReference type="PANTHER" id="PTHR10252">
    <property type="entry name" value="HISTONE-LIKE TRANSCRIPTION FACTOR CCAAT-RELATED"/>
    <property type="match status" value="1"/>
</dbReference>
<dbReference type="PANTHER" id="PTHR10252:SF8">
    <property type="entry name" value="NUCLEAR TRANSCRIPTION FACTOR Y SUBUNIT GAMMA"/>
    <property type="match status" value="1"/>
</dbReference>
<dbReference type="Pfam" id="PF00125">
    <property type="entry name" value="Histone"/>
    <property type="match status" value="1"/>
</dbReference>
<dbReference type="SUPFAM" id="SSF47113">
    <property type="entry name" value="Histone-fold"/>
    <property type="match status" value="1"/>
</dbReference>
<organism>
    <name type="scientific">Saccharomyces cerevisiae (strain ATCC 204508 / S288c)</name>
    <name type="common">Baker's yeast</name>
    <dbReference type="NCBI Taxonomy" id="559292"/>
    <lineage>
        <taxon>Eukaryota</taxon>
        <taxon>Fungi</taxon>
        <taxon>Dikarya</taxon>
        <taxon>Ascomycota</taxon>
        <taxon>Saccharomycotina</taxon>
        <taxon>Saccharomycetes</taxon>
        <taxon>Saccharomycetales</taxon>
        <taxon>Saccharomycetaceae</taxon>
        <taxon>Saccharomyces</taxon>
    </lineage>
</organism>